<dbReference type="EMBL" id="CP000482">
    <property type="protein sequence ID" value="ABK99386.1"/>
    <property type="molecule type" value="Genomic_DNA"/>
</dbReference>
<dbReference type="RefSeq" id="WP_011735663.1">
    <property type="nucleotide sequence ID" value="NC_008609.1"/>
</dbReference>
<dbReference type="SMR" id="A1APW6"/>
<dbReference type="STRING" id="338966.Ppro_1774"/>
<dbReference type="KEGG" id="ppd:Ppro_1774"/>
<dbReference type="eggNOG" id="COG0268">
    <property type="taxonomic scope" value="Bacteria"/>
</dbReference>
<dbReference type="HOGENOM" id="CLU_160655_3_1_7"/>
<dbReference type="OrthoDB" id="9807974at2"/>
<dbReference type="Proteomes" id="UP000006732">
    <property type="component" value="Chromosome"/>
</dbReference>
<dbReference type="GO" id="GO:0005829">
    <property type="term" value="C:cytosol"/>
    <property type="evidence" value="ECO:0007669"/>
    <property type="project" value="TreeGrafter"/>
</dbReference>
<dbReference type="GO" id="GO:0015935">
    <property type="term" value="C:small ribosomal subunit"/>
    <property type="evidence" value="ECO:0007669"/>
    <property type="project" value="TreeGrafter"/>
</dbReference>
<dbReference type="GO" id="GO:0070181">
    <property type="term" value="F:small ribosomal subunit rRNA binding"/>
    <property type="evidence" value="ECO:0007669"/>
    <property type="project" value="TreeGrafter"/>
</dbReference>
<dbReference type="GO" id="GO:0003735">
    <property type="term" value="F:structural constituent of ribosome"/>
    <property type="evidence" value="ECO:0007669"/>
    <property type="project" value="InterPro"/>
</dbReference>
<dbReference type="GO" id="GO:0006412">
    <property type="term" value="P:translation"/>
    <property type="evidence" value="ECO:0007669"/>
    <property type="project" value="UniProtKB-UniRule"/>
</dbReference>
<dbReference type="FunFam" id="1.20.58.110:FF:000001">
    <property type="entry name" value="30S ribosomal protein S20"/>
    <property type="match status" value="1"/>
</dbReference>
<dbReference type="Gene3D" id="1.20.58.110">
    <property type="entry name" value="Ribosomal protein S20"/>
    <property type="match status" value="1"/>
</dbReference>
<dbReference type="HAMAP" id="MF_00500">
    <property type="entry name" value="Ribosomal_bS20"/>
    <property type="match status" value="1"/>
</dbReference>
<dbReference type="InterPro" id="IPR002583">
    <property type="entry name" value="Ribosomal_bS20"/>
</dbReference>
<dbReference type="InterPro" id="IPR036510">
    <property type="entry name" value="Ribosomal_bS20_sf"/>
</dbReference>
<dbReference type="NCBIfam" id="TIGR00029">
    <property type="entry name" value="S20"/>
    <property type="match status" value="1"/>
</dbReference>
<dbReference type="PANTHER" id="PTHR33398">
    <property type="entry name" value="30S RIBOSOMAL PROTEIN S20"/>
    <property type="match status" value="1"/>
</dbReference>
<dbReference type="PANTHER" id="PTHR33398:SF1">
    <property type="entry name" value="SMALL RIBOSOMAL SUBUNIT PROTEIN BS20C"/>
    <property type="match status" value="1"/>
</dbReference>
<dbReference type="Pfam" id="PF01649">
    <property type="entry name" value="Ribosomal_S20p"/>
    <property type="match status" value="1"/>
</dbReference>
<dbReference type="SUPFAM" id="SSF46992">
    <property type="entry name" value="Ribosomal protein S20"/>
    <property type="match status" value="1"/>
</dbReference>
<sequence>MAHHKSAIKRIKQNAKKNARNRHISSTLKTYIKRVREAVEAKDKEAATVALKAAIPVIDKTATKGVIHSSNASRTVSRLTKLVNTLG</sequence>
<reference key="1">
    <citation type="submission" date="2006-10" db="EMBL/GenBank/DDBJ databases">
        <title>Complete sequence of chromosome of Pelobacter propionicus DSM 2379.</title>
        <authorList>
            <consortium name="US DOE Joint Genome Institute"/>
            <person name="Copeland A."/>
            <person name="Lucas S."/>
            <person name="Lapidus A."/>
            <person name="Barry K."/>
            <person name="Detter J.C."/>
            <person name="Glavina del Rio T."/>
            <person name="Hammon N."/>
            <person name="Israni S."/>
            <person name="Dalin E."/>
            <person name="Tice H."/>
            <person name="Pitluck S."/>
            <person name="Saunders E."/>
            <person name="Brettin T."/>
            <person name="Bruce D."/>
            <person name="Han C."/>
            <person name="Tapia R."/>
            <person name="Schmutz J."/>
            <person name="Larimer F."/>
            <person name="Land M."/>
            <person name="Hauser L."/>
            <person name="Kyrpides N."/>
            <person name="Kim E."/>
            <person name="Lovley D."/>
            <person name="Richardson P."/>
        </authorList>
    </citation>
    <scope>NUCLEOTIDE SEQUENCE [LARGE SCALE GENOMIC DNA]</scope>
    <source>
        <strain>DSM 2379 / NBRC 103807 / OttBd1</strain>
    </source>
</reference>
<organism>
    <name type="scientific">Pelobacter propionicus (strain DSM 2379 / NBRC 103807 / OttBd1)</name>
    <dbReference type="NCBI Taxonomy" id="338966"/>
    <lineage>
        <taxon>Bacteria</taxon>
        <taxon>Pseudomonadati</taxon>
        <taxon>Thermodesulfobacteriota</taxon>
        <taxon>Desulfuromonadia</taxon>
        <taxon>Desulfuromonadales</taxon>
        <taxon>Desulfuromonadaceae</taxon>
        <taxon>Pelobacter</taxon>
    </lineage>
</organism>
<comment type="function">
    <text evidence="1">Binds directly to 16S ribosomal RNA.</text>
</comment>
<comment type="similarity">
    <text evidence="1">Belongs to the bacterial ribosomal protein bS20 family.</text>
</comment>
<gene>
    <name evidence="1" type="primary">rpsT</name>
    <name type="ordered locus">Ppro_1774</name>
</gene>
<feature type="chain" id="PRO_1000014622" description="Small ribosomal subunit protein bS20">
    <location>
        <begin position="1"/>
        <end position="87"/>
    </location>
</feature>
<feature type="region of interest" description="Disordered" evidence="2">
    <location>
        <begin position="1"/>
        <end position="22"/>
    </location>
</feature>
<name>RS20_PELPD</name>
<proteinExistence type="inferred from homology"/>
<keyword id="KW-1185">Reference proteome</keyword>
<keyword id="KW-0687">Ribonucleoprotein</keyword>
<keyword id="KW-0689">Ribosomal protein</keyword>
<keyword id="KW-0694">RNA-binding</keyword>
<keyword id="KW-0699">rRNA-binding</keyword>
<protein>
    <recommendedName>
        <fullName evidence="1">Small ribosomal subunit protein bS20</fullName>
    </recommendedName>
    <alternativeName>
        <fullName evidence="3">30S ribosomal protein S20</fullName>
    </alternativeName>
</protein>
<accession>A1APW6</accession>
<evidence type="ECO:0000255" key="1">
    <source>
        <dbReference type="HAMAP-Rule" id="MF_00500"/>
    </source>
</evidence>
<evidence type="ECO:0000256" key="2">
    <source>
        <dbReference type="SAM" id="MobiDB-lite"/>
    </source>
</evidence>
<evidence type="ECO:0000305" key="3"/>